<dbReference type="EMBL" id="AP008231">
    <property type="protein sequence ID" value="BAD79770.1"/>
    <property type="molecule type" value="Genomic_DNA"/>
</dbReference>
<dbReference type="RefSeq" id="WP_011243890.1">
    <property type="nucleotide sequence ID" value="NC_006576.1"/>
</dbReference>
<dbReference type="SMR" id="Q5N1Q0"/>
<dbReference type="KEGG" id="syc:syc1580_c"/>
<dbReference type="eggNOG" id="COG0052">
    <property type="taxonomic scope" value="Bacteria"/>
</dbReference>
<dbReference type="Proteomes" id="UP000001175">
    <property type="component" value="Chromosome"/>
</dbReference>
<dbReference type="GO" id="GO:0022627">
    <property type="term" value="C:cytosolic small ribosomal subunit"/>
    <property type="evidence" value="ECO:0007669"/>
    <property type="project" value="TreeGrafter"/>
</dbReference>
<dbReference type="GO" id="GO:0003735">
    <property type="term" value="F:structural constituent of ribosome"/>
    <property type="evidence" value="ECO:0007669"/>
    <property type="project" value="InterPro"/>
</dbReference>
<dbReference type="GO" id="GO:0006412">
    <property type="term" value="P:translation"/>
    <property type="evidence" value="ECO:0007669"/>
    <property type="project" value="UniProtKB-UniRule"/>
</dbReference>
<dbReference type="CDD" id="cd01425">
    <property type="entry name" value="RPS2"/>
    <property type="match status" value="1"/>
</dbReference>
<dbReference type="FunFam" id="1.10.287.610:FF:000001">
    <property type="entry name" value="30S ribosomal protein S2"/>
    <property type="match status" value="1"/>
</dbReference>
<dbReference type="Gene3D" id="3.40.50.10490">
    <property type="entry name" value="Glucose-6-phosphate isomerase like protein, domain 1"/>
    <property type="match status" value="1"/>
</dbReference>
<dbReference type="Gene3D" id="1.10.287.610">
    <property type="entry name" value="Helix hairpin bin"/>
    <property type="match status" value="1"/>
</dbReference>
<dbReference type="HAMAP" id="MF_00291_B">
    <property type="entry name" value="Ribosomal_uS2_B"/>
    <property type="match status" value="1"/>
</dbReference>
<dbReference type="InterPro" id="IPR001865">
    <property type="entry name" value="Ribosomal_uS2"/>
</dbReference>
<dbReference type="InterPro" id="IPR005706">
    <property type="entry name" value="Ribosomal_uS2_bac/mit/plastid"/>
</dbReference>
<dbReference type="InterPro" id="IPR018130">
    <property type="entry name" value="Ribosomal_uS2_CS"/>
</dbReference>
<dbReference type="InterPro" id="IPR023591">
    <property type="entry name" value="Ribosomal_uS2_flav_dom_sf"/>
</dbReference>
<dbReference type="NCBIfam" id="TIGR01011">
    <property type="entry name" value="rpsB_bact"/>
    <property type="match status" value="1"/>
</dbReference>
<dbReference type="PANTHER" id="PTHR12534">
    <property type="entry name" value="30S RIBOSOMAL PROTEIN S2 PROKARYOTIC AND ORGANELLAR"/>
    <property type="match status" value="1"/>
</dbReference>
<dbReference type="PANTHER" id="PTHR12534:SF0">
    <property type="entry name" value="SMALL RIBOSOMAL SUBUNIT PROTEIN US2M"/>
    <property type="match status" value="1"/>
</dbReference>
<dbReference type="Pfam" id="PF00318">
    <property type="entry name" value="Ribosomal_S2"/>
    <property type="match status" value="1"/>
</dbReference>
<dbReference type="PRINTS" id="PR00395">
    <property type="entry name" value="RIBOSOMALS2"/>
</dbReference>
<dbReference type="SUPFAM" id="SSF52313">
    <property type="entry name" value="Ribosomal protein S2"/>
    <property type="match status" value="1"/>
</dbReference>
<dbReference type="PROSITE" id="PS00962">
    <property type="entry name" value="RIBOSOMAL_S2_1"/>
    <property type="match status" value="1"/>
</dbReference>
<dbReference type="PROSITE" id="PS00963">
    <property type="entry name" value="RIBOSOMAL_S2_2"/>
    <property type="match status" value="1"/>
</dbReference>
<name>RS2_SYNP6</name>
<comment type="similarity">
    <text evidence="1">Belongs to the universal ribosomal protein uS2 family.</text>
</comment>
<keyword id="KW-0687">Ribonucleoprotein</keyword>
<keyword id="KW-0689">Ribosomal protein</keyword>
<organism>
    <name type="scientific">Synechococcus sp. (strain ATCC 27144 / PCC 6301 / SAUG 1402/1)</name>
    <name type="common">Anacystis nidulans</name>
    <dbReference type="NCBI Taxonomy" id="269084"/>
    <lineage>
        <taxon>Bacteria</taxon>
        <taxon>Bacillati</taxon>
        <taxon>Cyanobacteriota</taxon>
        <taxon>Cyanophyceae</taxon>
        <taxon>Synechococcales</taxon>
        <taxon>Synechococcaceae</taxon>
        <taxon>Synechococcus</taxon>
    </lineage>
</organism>
<protein>
    <recommendedName>
        <fullName evidence="1">Small ribosomal subunit protein uS2</fullName>
    </recommendedName>
    <alternativeName>
        <fullName evidence="2">30S ribosomal protein S2</fullName>
    </alternativeName>
</protein>
<feature type="chain" id="PRO_0000134259" description="Small ribosomal subunit protein uS2">
    <location>
        <begin position="1"/>
        <end position="251"/>
    </location>
</feature>
<proteinExistence type="inferred from homology"/>
<sequence>MAIISLAEMMESGVHFGHQTRRWNPRMAPYIYTARNGVHIIDLVKTAQCVETAYRWVRTNAEQGKRFLFVGTKRQAAGIIAEEATRCGSYYINQRWLGGMLTNWATIKGRVDRLKELERMGETGALALRPKKEAAVLRRELERLQKYLGGIKNMRRLPDAVVIIDQKREYNAVQECQKLGIPIVAMLDTNCDPDVVDVPIPGNDDAIRSVKLIVSKLADAIYEARHGAAPVAEEYDYDGAEDEYEDDADEA</sequence>
<gene>
    <name evidence="1" type="primary">rpsB</name>
    <name evidence="1" type="synonym">rps2</name>
    <name type="ordered locus">syc1580_c</name>
</gene>
<evidence type="ECO:0000255" key="1">
    <source>
        <dbReference type="HAMAP-Rule" id="MF_00291"/>
    </source>
</evidence>
<evidence type="ECO:0000305" key="2"/>
<reference key="1">
    <citation type="journal article" date="2007" name="Photosyn. Res.">
        <title>Complete nucleotide sequence of the freshwater unicellular cyanobacterium Synechococcus elongatus PCC 6301 chromosome: gene content and organization.</title>
        <authorList>
            <person name="Sugita C."/>
            <person name="Ogata K."/>
            <person name="Shikata M."/>
            <person name="Jikuya H."/>
            <person name="Takano J."/>
            <person name="Furumichi M."/>
            <person name="Kanehisa M."/>
            <person name="Omata T."/>
            <person name="Sugiura M."/>
            <person name="Sugita M."/>
        </authorList>
    </citation>
    <scope>NUCLEOTIDE SEQUENCE [LARGE SCALE GENOMIC DNA]</scope>
    <source>
        <strain>ATCC 27144 / PCC 6301 / SAUG 1402/1</strain>
    </source>
</reference>
<accession>Q5N1Q0</accession>